<dbReference type="EMBL" id="AY935254">
    <property type="protein sequence ID" value="AAY21185.1"/>
    <property type="molecule type" value="mRNA"/>
</dbReference>
<dbReference type="SMR" id="A1L019"/>
<dbReference type="VEuPathDB" id="FungiDB:PITG_00058"/>
<dbReference type="OMA" id="CAPTEYV"/>
<dbReference type="GO" id="GO:0005576">
    <property type="term" value="C:extracellular region"/>
    <property type="evidence" value="ECO:0007669"/>
    <property type="project" value="UniProtKB-SubCell"/>
</dbReference>
<dbReference type="GO" id="GO:0004869">
    <property type="term" value="F:cysteine-type endopeptidase inhibitor activity"/>
    <property type="evidence" value="ECO:0007669"/>
    <property type="project" value="UniProtKB-KW"/>
</dbReference>
<dbReference type="CDD" id="cd00042">
    <property type="entry name" value="CY"/>
    <property type="match status" value="1"/>
</dbReference>
<dbReference type="Gene3D" id="3.10.450.10">
    <property type="match status" value="1"/>
</dbReference>
<dbReference type="InterPro" id="IPR000010">
    <property type="entry name" value="Cystatin_dom"/>
</dbReference>
<dbReference type="InterPro" id="IPR046350">
    <property type="entry name" value="Cystatin_sf"/>
</dbReference>
<dbReference type="SUPFAM" id="SSF54403">
    <property type="entry name" value="Cystatin/monellin"/>
    <property type="match status" value="1"/>
</dbReference>
<dbReference type="PROSITE" id="PS00287">
    <property type="entry name" value="CYSTATIN"/>
    <property type="match status" value="1"/>
</dbReference>
<comment type="function">
    <text evidence="7">Secreted effector that interacts with and inhibits host apoplastic pathogenesis-related papain-like cysteine proteases (Probable). Inhibition of host proteases by a pathogen extracellular protease inhibitor forms a specific type of defense-counterdefense mechanism between plants and microbial pathogens (Probable).</text>
</comment>
<comment type="subcellular location">
    <subcellularLocation>
        <location evidence="7">Secreted</location>
    </subcellularLocation>
    <text evidence="7">Localizes to host apoplast where it targets defense proteases for inhibition.</text>
</comment>
<comment type="induction">
    <text evidence="4">Expressed during infection of host plant and non-sporulating growth, upon nitrogen starvation, in mating culture, in mycelium as well as in ungerminated sporangia.</text>
</comment>
<comment type="similarity">
    <text evidence="6">Belongs to the cystatin family.</text>
</comment>
<organism>
    <name type="scientific">Phytophthora infestans</name>
    <name type="common">Potato late blight agent</name>
    <name type="synonym">Botrytis infestans</name>
    <dbReference type="NCBI Taxonomy" id="4787"/>
    <lineage>
        <taxon>Eukaryota</taxon>
        <taxon>Sar</taxon>
        <taxon>Stramenopiles</taxon>
        <taxon>Oomycota</taxon>
        <taxon>Peronosporales</taxon>
        <taxon>Peronosporaceae</taxon>
        <taxon>Phytophthora</taxon>
    </lineage>
</organism>
<keyword id="KW-0646">Protease inhibitor</keyword>
<keyword id="KW-0964">Secreted</keyword>
<keyword id="KW-0732">Signal</keyword>
<keyword id="KW-0789">Thiol protease inhibitor</keyword>
<keyword id="KW-0843">Virulence</keyword>
<name>EPIC4_PHYIN</name>
<sequence>MRASLSILVAFPALAAARDVVTIGMTGSWHPADVTEDNTKLLGTALSGSSFSKSVGDKRVCYSEVTSLETQVVAGTNYRFHISGCDVTDSDGECSTSALSSCELSGFVVQIFEQSWTNTLKVTNIKAEEAATASSSSTPAPTPASTSTSASSSEETMLQSSVQQRAMFSDFV</sequence>
<proteinExistence type="evidence at transcript level"/>
<feature type="signal peptide" evidence="2">
    <location>
        <begin position="1"/>
        <end position="17"/>
    </location>
</feature>
<feature type="chain" id="PRO_5002636239" description="Cystatin-like cysteine protease inhibitor EPIC4">
    <location>
        <begin position="18"/>
        <end position="172"/>
    </location>
</feature>
<feature type="region of interest" description="Disordered" evidence="3">
    <location>
        <begin position="129"/>
        <end position="172"/>
    </location>
</feature>
<feature type="short sequence motif" description="Secondary area of contact" evidence="1">
    <location>
        <begin position="71"/>
        <end position="75"/>
    </location>
</feature>
<feature type="compositionally biased region" description="Low complexity" evidence="3">
    <location>
        <begin position="130"/>
        <end position="156"/>
    </location>
</feature>
<feature type="compositionally biased region" description="Polar residues" evidence="3">
    <location>
        <begin position="157"/>
        <end position="166"/>
    </location>
</feature>
<feature type="site" description="Reactive site" evidence="1">
    <location>
        <position position="27"/>
    </location>
</feature>
<protein>
    <recommendedName>
        <fullName evidence="5">Cystatin-like cysteine protease inhibitor EPIC4</fullName>
    </recommendedName>
    <alternativeName>
        <fullName evidence="5">Extracellular protease inhibitor with cystatin-like domain protein 4</fullName>
    </alternativeName>
    <alternativeName>
        <fullName evidence="5">Secreted effector EPIC4</fullName>
    </alternativeName>
</protein>
<accession>A1L019</accession>
<reference key="1">
    <citation type="journal article" date="2007" name="Plant Physiol.">
        <title>A Phytophthora infestans cystatin-like protein targets a novel tomato papain-like apoplastic protease.</title>
        <authorList>
            <person name="Tian M."/>
            <person name="Win J."/>
            <person name="Song J."/>
            <person name="van der Hoorn R."/>
            <person name="van der Knaap E."/>
            <person name="Kamoun S."/>
        </authorList>
    </citation>
    <scope>NUCLEOTIDE SEQUENCE [MRNA]</scope>
    <scope>INDUCTION</scope>
    <source>
        <strain>Isolate 88069</strain>
    </source>
</reference>
<gene>
    <name evidence="5" type="primary">EPIC4</name>
</gene>
<evidence type="ECO:0000250" key="1">
    <source>
        <dbReference type="UniProtKB" id="P01040"/>
    </source>
</evidence>
<evidence type="ECO:0000255" key="2"/>
<evidence type="ECO:0000256" key="3">
    <source>
        <dbReference type="SAM" id="MobiDB-lite"/>
    </source>
</evidence>
<evidence type="ECO:0000269" key="4">
    <source>
    </source>
</evidence>
<evidence type="ECO:0000303" key="5">
    <source>
    </source>
</evidence>
<evidence type="ECO:0000305" key="6"/>
<evidence type="ECO:0000305" key="7">
    <source>
    </source>
</evidence>